<accession>P39745</accession>
<accession>Q9U3F3</accession>
<feature type="chain" id="PRO_0000186306" description="Mitogen-activated protein kinase mpk-1">
    <location>
        <begin position="1"/>
        <end position="444"/>
    </location>
</feature>
<feature type="domain" description="Protein kinase" evidence="1">
    <location>
        <begin position="96"/>
        <end position="384"/>
    </location>
</feature>
<feature type="region of interest" description="Disordered" evidence="3">
    <location>
        <begin position="1"/>
        <end position="56"/>
    </location>
</feature>
<feature type="short sequence motif" description="TXY">
    <location>
        <begin position="256"/>
        <end position="258"/>
    </location>
</feature>
<feature type="compositionally biased region" description="Polar residues" evidence="3">
    <location>
        <begin position="1"/>
        <end position="17"/>
    </location>
</feature>
<feature type="compositionally biased region" description="Polar residues" evidence="3">
    <location>
        <begin position="24"/>
        <end position="56"/>
    </location>
</feature>
<feature type="active site" description="Proton acceptor" evidence="1 2">
    <location>
        <position position="220"/>
    </location>
</feature>
<feature type="binding site" evidence="1">
    <location>
        <begin position="102"/>
        <end position="110"/>
    </location>
    <ligand>
        <name>ATP</name>
        <dbReference type="ChEBI" id="CHEBI:30616"/>
    </ligand>
</feature>
<feature type="binding site" evidence="1">
    <location>
        <position position="125"/>
    </location>
    <ligand>
        <name>ATP</name>
        <dbReference type="ChEBI" id="CHEBI:30616"/>
    </ligand>
</feature>
<feature type="modified residue" description="Phosphothreonine" evidence="8 9 11 12">
    <location>
        <position position="256"/>
    </location>
</feature>
<feature type="modified residue" description="Phosphotyrosine" evidence="8 9 11 12">
    <location>
        <position position="258"/>
    </location>
</feature>
<feature type="splice variant" id="VSP_004848" description="In isoform a." evidence="16">
    <location>
        <begin position="1"/>
        <end position="68"/>
    </location>
</feature>
<feature type="mutagenesis site" description="In ku1; loss of function and ATP-binding. Lack of tail swelling, severe constipation and loss of ilys-3 expression up-regulation following M.nematophilium infection." evidence="5 13 14">
    <original>A</original>
    <variation>V</variation>
    <location>
        <position position="106"/>
    </location>
</feature>
<feature type="mutagenesis site" description="In ga111; at the restrictive temperature of 25 degrees Celsius, causes an increase in gld-1 expression and a loss of cep-1 expression in late pachytene germ cells. Loss of egl-1 mRNA expression in response to gamma irradiation. 70 percent of mutants have germ cells arrested at the pachytene stage; phenotype is reversible and meiosis can resume. At the somewhat permissive temperature of 20 degrees Celsius has reduced live brood size; brood size further decreased in pzf-1 mutant background. At the restrictive temperature of 26 degrees Celsius, are completely sterile. Partial phosphorylation at Thr-256 and Tyr-258." evidence="7 11">
    <original>V</original>
    <variation>G</variation>
    <location>
        <position position="216"/>
    </location>
</feature>
<feature type="sequence conflict" description="In Ref. 2; AAA18956." evidence="17" ref="2">
    <original>LC</original>
    <variation>FF</variation>
    <location>
        <begin position="9"/>
        <end position="10"/>
    </location>
</feature>
<dbReference type="EC" id="2.7.11.24" evidence="9"/>
<dbReference type="EMBL" id="U03879">
    <property type="protein sequence ID" value="AAA18956.1"/>
    <property type="molecule type" value="mRNA"/>
</dbReference>
<dbReference type="EMBL" id="U27124">
    <property type="protein sequence ID" value="AAA73482.1"/>
    <property type="molecule type" value="mRNA"/>
</dbReference>
<dbReference type="EMBL" id="Z46937">
    <property type="protein sequence ID" value="CAA87057.1"/>
    <property type="molecule type" value="Genomic_DNA"/>
</dbReference>
<dbReference type="EMBL" id="Z46937">
    <property type="protein sequence ID" value="CAB60996.1"/>
    <property type="molecule type" value="Genomic_DNA"/>
</dbReference>
<dbReference type="PIR" id="A36977">
    <property type="entry name" value="A36977"/>
</dbReference>
<dbReference type="PIR" id="A36978">
    <property type="entry name" value="A36978"/>
</dbReference>
<dbReference type="RefSeq" id="NP_001022583.1">
    <property type="nucleotide sequence ID" value="NM_001027412.3"/>
</dbReference>
<dbReference type="RefSeq" id="NP_001022584.1">
    <molecule id="P39745-1"/>
    <property type="nucleotide sequence ID" value="NM_001027413.4"/>
</dbReference>
<dbReference type="RefSeq" id="NP_001366708.1">
    <molecule id="P39745-2"/>
    <property type="nucleotide sequence ID" value="NM_001381825.1"/>
</dbReference>
<dbReference type="SMR" id="P39745"/>
<dbReference type="BioGRID" id="40782">
    <property type="interactions" value="98"/>
</dbReference>
<dbReference type="DIP" id="DIP-26227N"/>
<dbReference type="FunCoup" id="P39745">
    <property type="interactions" value="2304"/>
</dbReference>
<dbReference type="IntAct" id="P39745">
    <property type="interactions" value="52"/>
</dbReference>
<dbReference type="MINT" id="P39745"/>
<dbReference type="STRING" id="6239.F43C1.2b.1"/>
<dbReference type="iPTMnet" id="P39745"/>
<dbReference type="PaxDb" id="6239-F43C1.2b"/>
<dbReference type="PeptideAtlas" id="P39745"/>
<dbReference type="EnsemblMetazoa" id="F43C1.2a.1">
    <molecule id="P39745-2"/>
    <property type="protein sequence ID" value="F43C1.2a.1"/>
    <property type="gene ID" value="WBGene00003401"/>
</dbReference>
<dbReference type="EnsemblMetazoa" id="F43C1.2a.2">
    <molecule id="P39745-2"/>
    <property type="protein sequence ID" value="F43C1.2a.2"/>
    <property type="gene ID" value="WBGene00003401"/>
</dbReference>
<dbReference type="EnsemblMetazoa" id="F43C1.2b.1">
    <molecule id="P39745-1"/>
    <property type="protein sequence ID" value="F43C1.2b.1"/>
    <property type="gene ID" value="WBGene00003401"/>
</dbReference>
<dbReference type="GeneID" id="175545"/>
<dbReference type="KEGG" id="cel:CELE_F43C1.2"/>
<dbReference type="UCSC" id="F43C1.2a.1">
    <molecule id="P39745-1"/>
    <property type="organism name" value="c. elegans"/>
</dbReference>
<dbReference type="AGR" id="WB:WBGene00003401"/>
<dbReference type="CTD" id="175545"/>
<dbReference type="WormBase" id="F43C1.2a">
    <molecule id="P39745-2"/>
    <property type="protein sequence ID" value="CE01583"/>
    <property type="gene ID" value="WBGene00003401"/>
    <property type="gene designation" value="mpk-1"/>
</dbReference>
<dbReference type="WormBase" id="F43C1.2b">
    <molecule id="P39745-1"/>
    <property type="protein sequence ID" value="CE24971"/>
    <property type="gene ID" value="WBGene00003401"/>
    <property type="gene designation" value="mpk-1"/>
</dbReference>
<dbReference type="eggNOG" id="KOG0660">
    <property type="taxonomic scope" value="Eukaryota"/>
</dbReference>
<dbReference type="GeneTree" id="ENSGT00940000156771"/>
<dbReference type="InParanoid" id="P39745"/>
<dbReference type="OMA" id="VTHGGQY"/>
<dbReference type="OrthoDB" id="192887at2759"/>
<dbReference type="PhylomeDB" id="P39745"/>
<dbReference type="BRENDA" id="2.7.11.24">
    <property type="organism ID" value="1045"/>
</dbReference>
<dbReference type="Reactome" id="R-CEL-110056">
    <property type="pathway name" value="MAPK3 (ERK1) activation"/>
</dbReference>
<dbReference type="Reactome" id="R-CEL-112409">
    <property type="pathway name" value="RAF-independent MAPK1/3 activation"/>
</dbReference>
<dbReference type="Reactome" id="R-CEL-112411">
    <property type="pathway name" value="MAPK1 (ERK2) activation"/>
</dbReference>
<dbReference type="Reactome" id="R-CEL-1169408">
    <property type="pathway name" value="ISG15 antiviral mechanism"/>
</dbReference>
<dbReference type="Reactome" id="R-CEL-1181150">
    <property type="pathway name" value="Signaling by NODAL"/>
</dbReference>
<dbReference type="Reactome" id="R-CEL-1502540">
    <property type="pathway name" value="Signaling by Activin"/>
</dbReference>
<dbReference type="Reactome" id="R-CEL-162658">
    <property type="pathway name" value="Golgi Cisternae Pericentriolar Stack Reorganization"/>
</dbReference>
<dbReference type="Reactome" id="R-CEL-170968">
    <property type="pathway name" value="Frs2-mediated activation"/>
</dbReference>
<dbReference type="Reactome" id="R-CEL-198753">
    <property type="pathway name" value="ERK/MAPK targets"/>
</dbReference>
<dbReference type="Reactome" id="R-CEL-202670">
    <property type="pathway name" value="ERKs are inactivated"/>
</dbReference>
<dbReference type="Reactome" id="R-CEL-2029482">
    <property type="pathway name" value="Regulation of actin dynamics for phagocytic cup formation"/>
</dbReference>
<dbReference type="Reactome" id="R-CEL-2173795">
    <property type="pathway name" value="Downregulation of SMAD2/3:SMAD4 transcriptional activity"/>
</dbReference>
<dbReference type="Reactome" id="R-CEL-2173796">
    <property type="pathway name" value="SMAD2/SMAD3:SMAD4 heterotrimer regulates transcription"/>
</dbReference>
<dbReference type="Reactome" id="R-CEL-2559580">
    <property type="pathway name" value="Oxidative Stress Induced Senescence"/>
</dbReference>
<dbReference type="Reactome" id="R-CEL-2559582">
    <property type="pathway name" value="Senescence-Associated Secretory Phenotype (SASP)"/>
</dbReference>
<dbReference type="Reactome" id="R-CEL-2871796">
    <property type="pathway name" value="FCERI mediated MAPK activation"/>
</dbReference>
<dbReference type="Reactome" id="R-CEL-3371453">
    <property type="pathway name" value="Regulation of HSF1-mediated heat shock response"/>
</dbReference>
<dbReference type="Reactome" id="R-CEL-375165">
    <property type="pathway name" value="NCAM signaling for neurite out-growth"/>
</dbReference>
<dbReference type="Reactome" id="R-CEL-437239">
    <property type="pathway name" value="Recycling pathway of L1"/>
</dbReference>
<dbReference type="Reactome" id="R-CEL-445144">
    <property type="pathway name" value="Signal transduction by L1"/>
</dbReference>
<dbReference type="Reactome" id="R-CEL-450341">
    <property type="pathway name" value="Activation of the AP-1 family of transcription factors"/>
</dbReference>
<dbReference type="Reactome" id="R-CEL-456926">
    <property type="pathway name" value="Thrombin signalling through proteinase activated receptors (PARs)"/>
</dbReference>
<dbReference type="Reactome" id="R-CEL-5654726">
    <property type="pathway name" value="Negative regulation of FGFR1 signaling"/>
</dbReference>
<dbReference type="Reactome" id="R-CEL-5654733">
    <property type="pathway name" value="Negative regulation of FGFR4 signaling"/>
</dbReference>
<dbReference type="Reactome" id="R-CEL-5663213">
    <property type="pathway name" value="RHO GTPases Activate WASPs and WAVEs"/>
</dbReference>
<dbReference type="Reactome" id="R-CEL-5673001">
    <property type="pathway name" value="RAF/MAP kinase cascade"/>
</dbReference>
<dbReference type="Reactome" id="R-CEL-5674135">
    <property type="pathway name" value="MAP2K and MAPK activation"/>
</dbReference>
<dbReference type="Reactome" id="R-CEL-5674499">
    <property type="pathway name" value="Negative feedback regulation of MAPK pathway"/>
</dbReference>
<dbReference type="Reactome" id="R-CEL-5675221">
    <property type="pathway name" value="Negative regulation of MAPK pathway"/>
</dbReference>
<dbReference type="Reactome" id="R-CEL-6798695">
    <property type="pathway name" value="Neutrophil degranulation"/>
</dbReference>
<dbReference type="Reactome" id="R-CEL-877300">
    <property type="pathway name" value="Interferon gamma signaling"/>
</dbReference>
<dbReference type="Reactome" id="R-CEL-881907">
    <property type="pathway name" value="Gastrin-CREB signalling pathway via PKC and MAPK"/>
</dbReference>
<dbReference type="Reactome" id="R-CEL-9634635">
    <property type="pathway name" value="Estrogen-stimulated signaling through PRKCZ"/>
</dbReference>
<dbReference type="Reactome" id="R-CEL-9634638">
    <property type="pathway name" value="Estrogen-dependent nuclear events downstream of ESR-membrane signaling"/>
</dbReference>
<dbReference type="Reactome" id="R-CEL-9856649">
    <property type="pathway name" value="Transcriptional and post-translational regulation of MITF-M expression and activity"/>
</dbReference>
<dbReference type="SignaLink" id="P39745"/>
<dbReference type="PRO" id="PR:P39745"/>
<dbReference type="Proteomes" id="UP000001940">
    <property type="component" value="Chromosome III"/>
</dbReference>
<dbReference type="Bgee" id="WBGene00003401">
    <property type="expression patterns" value="Expressed in germ line (C elegans) and 5 other cell types or tissues"/>
</dbReference>
<dbReference type="GO" id="GO:0005737">
    <property type="term" value="C:cytoplasm"/>
    <property type="evidence" value="ECO:0000314"/>
    <property type="project" value="WormBase"/>
</dbReference>
<dbReference type="GO" id="GO:0005634">
    <property type="term" value="C:nucleus"/>
    <property type="evidence" value="ECO:0000314"/>
    <property type="project" value="WormBase"/>
</dbReference>
<dbReference type="GO" id="GO:0005524">
    <property type="term" value="F:ATP binding"/>
    <property type="evidence" value="ECO:0007669"/>
    <property type="project" value="UniProtKB-KW"/>
</dbReference>
<dbReference type="GO" id="GO:0004707">
    <property type="term" value="F:MAP kinase activity"/>
    <property type="evidence" value="ECO:0007669"/>
    <property type="project" value="UniProtKB-EC"/>
</dbReference>
<dbReference type="GO" id="GO:0046872">
    <property type="term" value="F:metal ion binding"/>
    <property type="evidence" value="ECO:0007669"/>
    <property type="project" value="UniProtKB-KW"/>
</dbReference>
<dbReference type="GO" id="GO:0106310">
    <property type="term" value="F:protein serine kinase activity"/>
    <property type="evidence" value="ECO:0007669"/>
    <property type="project" value="RHEA"/>
</dbReference>
<dbReference type="GO" id="GO:0004674">
    <property type="term" value="F:protein serine/threonine kinase activity"/>
    <property type="evidence" value="ECO:0000314"/>
    <property type="project" value="WormBase"/>
</dbReference>
<dbReference type="GO" id="GO:0007166">
    <property type="term" value="P:cell surface receptor signaling pathway"/>
    <property type="evidence" value="ECO:0000318"/>
    <property type="project" value="GO_Central"/>
</dbReference>
<dbReference type="GO" id="GO:0050830">
    <property type="term" value="P:defense response to Gram-positive bacterium"/>
    <property type="evidence" value="ECO:0000315"/>
    <property type="project" value="UniProtKB"/>
</dbReference>
<dbReference type="GO" id="GO:0035556">
    <property type="term" value="P:intracellular signal transduction"/>
    <property type="evidence" value="ECO:0000318"/>
    <property type="project" value="GO_Central"/>
</dbReference>
<dbReference type="GO" id="GO:0000165">
    <property type="term" value="P:MAPK cascade"/>
    <property type="evidence" value="ECO:0000315"/>
    <property type="project" value="UniProtKB"/>
</dbReference>
<dbReference type="GO" id="GO:0051321">
    <property type="term" value="P:meiotic cell cycle"/>
    <property type="evidence" value="ECO:0007669"/>
    <property type="project" value="UniProtKB-KW"/>
</dbReference>
<dbReference type="GO" id="GO:0001556">
    <property type="term" value="P:oocyte maturation"/>
    <property type="evidence" value="ECO:0000315"/>
    <property type="project" value="WormBase"/>
</dbReference>
<dbReference type="GO" id="GO:0032436">
    <property type="term" value="P:positive regulation of proteasomal ubiquitin-dependent protein catabolic process"/>
    <property type="evidence" value="ECO:0000315"/>
    <property type="project" value="UniProtKB"/>
</dbReference>
<dbReference type="GO" id="GO:0045944">
    <property type="term" value="P:positive regulation of transcription by RNA polymerase II"/>
    <property type="evidence" value="ECO:0000315"/>
    <property type="project" value="UniProtKB"/>
</dbReference>
<dbReference type="GO" id="GO:0007265">
    <property type="term" value="P:Ras protein signal transduction"/>
    <property type="evidence" value="ECO:0000316"/>
    <property type="project" value="WormBase"/>
</dbReference>
<dbReference type="GO" id="GO:0040025">
    <property type="term" value="P:vulval development"/>
    <property type="evidence" value="ECO:0000315"/>
    <property type="project" value="UniProtKB"/>
</dbReference>
<dbReference type="CDD" id="cd07849">
    <property type="entry name" value="STKc_ERK1_2_like"/>
    <property type="match status" value="1"/>
</dbReference>
<dbReference type="FunFam" id="1.10.510.10:FF:000624">
    <property type="entry name" value="Mitogen-activated protein kinase"/>
    <property type="match status" value="1"/>
</dbReference>
<dbReference type="FunFam" id="3.30.200.20:FF:000181">
    <property type="entry name" value="Mitogen-activated protein kinase"/>
    <property type="match status" value="1"/>
</dbReference>
<dbReference type="Gene3D" id="3.30.200.20">
    <property type="entry name" value="Phosphorylase Kinase, domain 1"/>
    <property type="match status" value="1"/>
</dbReference>
<dbReference type="Gene3D" id="1.10.510.10">
    <property type="entry name" value="Transferase(Phosphotransferase) domain 1"/>
    <property type="match status" value="1"/>
</dbReference>
<dbReference type="InterPro" id="IPR011009">
    <property type="entry name" value="Kinase-like_dom_sf"/>
</dbReference>
<dbReference type="InterPro" id="IPR050117">
    <property type="entry name" value="MAP_kinase"/>
</dbReference>
<dbReference type="InterPro" id="IPR003527">
    <property type="entry name" value="MAP_kinase_CS"/>
</dbReference>
<dbReference type="InterPro" id="IPR008349">
    <property type="entry name" value="MAPK_ERK1/2"/>
</dbReference>
<dbReference type="InterPro" id="IPR000719">
    <property type="entry name" value="Prot_kinase_dom"/>
</dbReference>
<dbReference type="InterPro" id="IPR017441">
    <property type="entry name" value="Protein_kinase_ATP_BS"/>
</dbReference>
<dbReference type="InterPro" id="IPR008271">
    <property type="entry name" value="Ser/Thr_kinase_AS"/>
</dbReference>
<dbReference type="PANTHER" id="PTHR24055">
    <property type="entry name" value="MITOGEN-ACTIVATED PROTEIN KINASE"/>
    <property type="match status" value="1"/>
</dbReference>
<dbReference type="Pfam" id="PF00069">
    <property type="entry name" value="Pkinase"/>
    <property type="match status" value="1"/>
</dbReference>
<dbReference type="PRINTS" id="PR01770">
    <property type="entry name" value="ERK1ERK2MAPK"/>
</dbReference>
<dbReference type="SMART" id="SM00220">
    <property type="entry name" value="S_TKc"/>
    <property type="match status" value="1"/>
</dbReference>
<dbReference type="SUPFAM" id="SSF56112">
    <property type="entry name" value="Protein kinase-like (PK-like)"/>
    <property type="match status" value="1"/>
</dbReference>
<dbReference type="PROSITE" id="PS01351">
    <property type="entry name" value="MAPK"/>
    <property type="match status" value="1"/>
</dbReference>
<dbReference type="PROSITE" id="PS00107">
    <property type="entry name" value="PROTEIN_KINASE_ATP"/>
    <property type="match status" value="1"/>
</dbReference>
<dbReference type="PROSITE" id="PS50011">
    <property type="entry name" value="PROTEIN_KINASE_DOM"/>
    <property type="match status" value="1"/>
</dbReference>
<dbReference type="PROSITE" id="PS00108">
    <property type="entry name" value="PROTEIN_KINASE_ST"/>
    <property type="match status" value="1"/>
</dbReference>
<evidence type="ECO:0000255" key="1">
    <source>
        <dbReference type="PROSITE-ProRule" id="PRU00159"/>
    </source>
</evidence>
<evidence type="ECO:0000255" key="2">
    <source>
        <dbReference type="PROSITE-ProRule" id="PRU10027"/>
    </source>
</evidence>
<evidence type="ECO:0000256" key="3">
    <source>
        <dbReference type="SAM" id="MobiDB-lite"/>
    </source>
</evidence>
<evidence type="ECO:0000269" key="4">
    <source>
    </source>
</evidence>
<evidence type="ECO:0000269" key="5">
    <source>
    </source>
</evidence>
<evidence type="ECO:0000269" key="6">
    <source>
    </source>
</evidence>
<evidence type="ECO:0000269" key="7">
    <source>
    </source>
</evidence>
<evidence type="ECO:0000269" key="8">
    <source>
    </source>
</evidence>
<evidence type="ECO:0000269" key="9">
    <source>
    </source>
</evidence>
<evidence type="ECO:0000269" key="10">
    <source>
    </source>
</evidence>
<evidence type="ECO:0000269" key="11">
    <source>
    </source>
</evidence>
<evidence type="ECO:0000269" key="12">
    <source>
    </source>
</evidence>
<evidence type="ECO:0000269" key="13">
    <source>
    </source>
</evidence>
<evidence type="ECO:0000269" key="14">
    <source>
    </source>
</evidence>
<evidence type="ECO:0000269" key="15">
    <source>
    </source>
</evidence>
<evidence type="ECO:0000303" key="16">
    <source>
    </source>
</evidence>
<evidence type="ECO:0000305" key="17"/>
<sequence>MPTWIPNNLCAQPTTRNAKPPSNGHPQATQQQSAPGSLAYRNSSNIPNGATNHVRQQKWQYTRSGHRKMADGEAVISTVNNVEEVHGQLFEVAPRYVNLSYIGEGAYGMVASALDTITRDRVAIKKISPFEHQTFCQRTLREIKILNRFKHENIINIQEIIRSETVDSLKDIYIVQCLMETDLYKLLKTQKLSNDHVCYFLYQILRGLKYIHSANVLHRDLKPSNLLLNTTCDLKICDFGLARVTDPQTDHTGFLTEYVATRWYRAPEIMLNSKGYTKSIDVWSVGCILAEMLSNRPLFPGKHYLDQLNLILAVVGSPSNADLQCIINDKARSYLISLPHKPKQPWARLYPGADPRALDLLDKMLTFNPHNRIDIEQALAHPYLEQYYDPGDEPVCEEPFTLEMEFDDLPKEKLKELIWEEAEAHHRRMEAEAAARNNGGQNPV</sequence>
<comment type="function">
    <text evidence="4 5 6 8 9 10 11 13 14 15">Functions in let-60 Ras signaling pathway; acts downstream of lin-45 raf kinase, but before the lin-1 gene product in controlling vulval cell differentiation (PubMed:8299935, PubMed:8299936). Plays a negative role in proximal germline proliferation in the mitotic zone (PubMed:16319922). Required for progression of developing oocytes through the pachytene stage, perhaps acting after efl-1/dpl-1-mediated gene activation and before gld-1 down-regulation (PubMed:16319922, PubMed:17096596, PubMed:19826475, PubMed:21901106). May play a role in global X chromosome reactivation or be indirectly required for progression of germ cells through meiosis to the point where X reactivation occurs (PubMed:17096596). In oocytes, inhibits the activity of the chloride channel clh-3, likely by activating gck-3 (PubMed:21160027). Plays a role in response to M.nematophilum-mediated bacterial infection by promoting tail swelling and preventing constipation (PubMed:15268855). Involved in fluid homeostasis (PubMed:11689700). In addition, involved in the up-regulation of lysozyme ilys-3 expression in the intestine in responses to M.nematophilum-mediated bacterial infection (PubMed:27525822). By phosphorylating transcription factor skn-1 (isoform c) may play a role in increasing life span downstream of lin-45, let-60 and mek-2 (PubMed:20624915). By up-regulating cep-1 and down-regulating gld-1 expression in the late pachytene stage, plays a role in germline apoptosis in response to DNA damage (PubMed:21901106). Regulates egl-1 expression in response to DNA damage, probably upstream of cep-1 (PubMed:21901106).</text>
</comment>
<comment type="function">
    <molecule>Isoform b</molecule>
    <text evidence="12">Suppresses germline tumor formation by preventing the dedifferentiation of secondary spermatocytes probably upstream of rskn-1.</text>
</comment>
<comment type="catalytic activity">
    <reaction evidence="9">
        <text>L-seryl-[protein] + ATP = O-phospho-L-seryl-[protein] + ADP + H(+)</text>
        <dbReference type="Rhea" id="RHEA:17989"/>
        <dbReference type="Rhea" id="RHEA-COMP:9863"/>
        <dbReference type="Rhea" id="RHEA-COMP:11604"/>
        <dbReference type="ChEBI" id="CHEBI:15378"/>
        <dbReference type="ChEBI" id="CHEBI:29999"/>
        <dbReference type="ChEBI" id="CHEBI:30616"/>
        <dbReference type="ChEBI" id="CHEBI:83421"/>
        <dbReference type="ChEBI" id="CHEBI:456216"/>
        <dbReference type="EC" id="2.7.11.24"/>
    </reaction>
</comment>
<comment type="catalytic activity">
    <reaction evidence="9">
        <text>L-threonyl-[protein] + ATP = O-phospho-L-threonyl-[protein] + ADP + H(+)</text>
        <dbReference type="Rhea" id="RHEA:46608"/>
        <dbReference type="Rhea" id="RHEA-COMP:11060"/>
        <dbReference type="Rhea" id="RHEA-COMP:11605"/>
        <dbReference type="ChEBI" id="CHEBI:15378"/>
        <dbReference type="ChEBI" id="CHEBI:30013"/>
        <dbReference type="ChEBI" id="CHEBI:30616"/>
        <dbReference type="ChEBI" id="CHEBI:61977"/>
        <dbReference type="ChEBI" id="CHEBI:456216"/>
        <dbReference type="EC" id="2.7.11.24"/>
    </reaction>
</comment>
<comment type="cofactor">
    <cofactor evidence="9">
        <name>Mg(2+)</name>
        <dbReference type="ChEBI" id="CHEBI:18420"/>
    </cofactor>
</comment>
<comment type="activity regulation">
    <text evidence="9 11">Activated by dual phosphorylation at Thr-256 and Tyr-258 (PubMed:20624915). May be inactivated by lip-1-mediated dephosphorylation (PubMed:21901106).</text>
</comment>
<comment type="subunit">
    <text evidence="8">Isoform a interacts with gck-1 (via N-terminus).</text>
</comment>
<comment type="interaction">
    <interactant intactId="EBI-321013">
        <id>P39745</id>
    </interactant>
    <interactant intactId="EBI-317795">
        <id>O02289</id>
        <label>gla-3</label>
    </interactant>
    <organismsDiffer>false</organismsDiffer>
    <experiments>3</experiments>
</comment>
<comment type="alternative products">
    <event type="alternative splicing"/>
    <isoform>
        <id>P39745-1</id>
        <name>b</name>
        <sequence type="displayed"/>
    </isoform>
    <isoform>
        <id>P39745-2</id>
        <name>a</name>
        <sequence type="described" ref="VSP_004848"/>
    </isoform>
</comment>
<comment type="tissue specificity">
    <text evidence="5 9 12">Expressed in cells lining the rectum (PubMed:15268855, PubMed:20624915). Isoform a is expressed in nervous system, body wall muscles and posterior intestine (PubMed:20624915). Isoform b expression may be restricted to germline (PubMed:22820175).</text>
</comment>
<comment type="developmental stage">
    <text evidence="8 11 12">The phosphorylated form is present in early to mid pachytene, is absent in late pachytene and diplotene/diakinesis stages and is again present in oocytes when they reach the spermatheca (PubMed:19826475, PubMed:21901106, PubMed:22820175). The phosphorylated form is also present in sperm (PubMed:22820175).</text>
</comment>
<comment type="domain">
    <text>The TXY motif contains the threonine and tyrosine residues whose phosphorylation activates the MAP kinases.</text>
</comment>
<comment type="PTM">
    <text evidence="8">Isoform a is phosphorylated at the pachytene stage during oogenesis and is negatively regulated by gck-1. Isoform b is phosphorylated in proximal oocytes.</text>
</comment>
<comment type="disruption phenotype">
    <text evidence="6 8 9 12 13">RNAi-mediated knockdown causes an increase in the number of germline cells in the mitotic zone, a lack of transition zone and a defect in pachytene progression resulting in a proximal gonad devoid of nuclei (PubMed:16319922, PubMed:19826475). Causes sterility (PubMed:19826475). RNAi-mediated knockdown in adults decreases lifespan (PubMed:20624915). RNAi-mediated knockdown of isoform b in lip-1 and puf-8 double mutant causes a decrease in number of germline tumors (PubMed:22820175). RNAi-mediated knockdown causes a reduction in intestinal ilys-3 expression in response to M.nematophilum-mediated bacterial infection (PubMed:27525822).</text>
</comment>
<comment type="similarity">
    <text evidence="17">Belongs to the protein kinase superfamily. CMGC Ser/Thr protein kinase family. MAP kinase subfamily.</text>
</comment>
<protein>
    <recommendedName>
        <fullName>Mitogen-activated protein kinase mpk-1</fullName>
        <ecNumber evidence="9">2.7.11.24</ecNumber>
    </recommendedName>
    <alternativeName>
        <fullName>MAP kinase sur-1</fullName>
    </alternativeName>
</protein>
<proteinExistence type="evidence at protein level"/>
<keyword id="KW-0025">Alternative splicing</keyword>
<keyword id="KW-0067">ATP-binding</keyword>
<keyword id="KW-0131">Cell cycle</keyword>
<keyword id="KW-0221">Differentiation</keyword>
<keyword id="KW-0418">Kinase</keyword>
<keyword id="KW-0460">Magnesium</keyword>
<keyword id="KW-0469">Meiosis</keyword>
<keyword id="KW-0479">Metal-binding</keyword>
<keyword id="KW-0547">Nucleotide-binding</keyword>
<keyword id="KW-0896">Oogenesis</keyword>
<keyword id="KW-0597">Phosphoprotein</keyword>
<keyword id="KW-1185">Reference proteome</keyword>
<keyword id="KW-0723">Serine/threonine-protein kinase</keyword>
<keyword id="KW-0808">Transferase</keyword>
<reference key="1">
    <citation type="journal article" date="1994" name="Genes Dev.">
        <title>Suppression of activated Let-60 ras protein defines a role of Caenorhabditis elegans Sur-1 MAP kinase in vulval differentiation.</title>
        <authorList>
            <person name="Wu Y."/>
            <person name="Han M."/>
        </authorList>
    </citation>
    <scope>NUCLEOTIDE SEQUENCE [MRNA] (ISOFORM B)</scope>
    <scope>MUTAGENESIS OF ALA-106</scope>
    <source>
        <strain>Bristol N2</strain>
    </source>
</reference>
<reference key="2">
    <citation type="journal article" date="1994" name="Genes Dev.">
        <title>A MAP kinase homolog, mpk-1, is involved in ras-mediated induction of vulval cell fates in Caenorhabditis elegans.</title>
        <authorList>
            <person name="Lackner M.R."/>
            <person name="Kornfeld K."/>
            <person name="Miller L.M."/>
            <person name="Horvitz H.R."/>
            <person name="Kim S.K."/>
        </authorList>
    </citation>
    <scope>NUCLEOTIDE SEQUENCE [MRNA] (ISOFORM A)</scope>
    <source>
        <strain>Bristol N2</strain>
    </source>
</reference>
<reference key="3">
    <citation type="journal article" date="1998" name="Science">
        <title>Genome sequence of the nematode C. elegans: a platform for investigating biology.</title>
        <authorList>
            <consortium name="The C. elegans sequencing consortium"/>
        </authorList>
    </citation>
    <scope>NUCLEOTIDE SEQUENCE [LARGE SCALE GENOMIC DNA]</scope>
    <source>
        <strain>Bristol N2</strain>
    </source>
</reference>
<reference key="4">
    <citation type="journal article" date="2001" name="Mol. Cell. Biol.">
        <title>The Caenorhabditis elegans EGL-15 signaling pathway implicates a DOS-like multisubstrate adaptor protein in fibroblast growth factor signal transduction.</title>
        <authorList>
            <person name="Schutzman J.L."/>
            <person name="Borland C.Z."/>
            <person name="Newman J.C."/>
            <person name="Robinson M.K."/>
            <person name="Kokel M."/>
            <person name="Stern M.J."/>
        </authorList>
    </citation>
    <scope>FUNCTION</scope>
    <source>
        <strain>Bristol N2</strain>
    </source>
</reference>
<reference key="5">
    <citation type="journal article" date="2004" name="Curr. Biol.">
        <title>The ERK MAP kinase cascade mediates tail swelling and a protective response to rectal infection in C. elegans.</title>
        <authorList>
            <person name="Nicholas H.R."/>
            <person name="Hodgkin J."/>
        </authorList>
    </citation>
    <scope>FUNCTION</scope>
    <scope>TISSUE SPECIFICITY</scope>
    <scope>MUTAGENESIS OF ALA-106</scope>
</reference>
<reference key="6">
    <citation type="journal article" date="2006" name="EMBO J.">
        <title>LIP-1 phosphatase controls the extent of germline proliferation in Caenorhabditis elegans.</title>
        <authorList>
            <person name="Lee M.H."/>
            <person name="Hook B."/>
            <person name="Lamont L.B."/>
            <person name="Wickens M."/>
            <person name="Kimble J."/>
        </authorList>
    </citation>
    <scope>FUNCTION</scope>
    <scope>DISRUPTION PHENOTYPE</scope>
</reference>
<reference evidence="17" key="7">
    <citation type="journal article" date="2006" name="PLoS Genet.">
        <title>Expression profiling of MAP kinase-mediated meiotic progression in Caenorhabditis elegans.</title>
        <authorList>
            <person name="Leacock S.W."/>
            <person name="Reinke V."/>
        </authorList>
    </citation>
    <scope>FUNCTION</scope>
    <scope>MUTAGENESIS OF VAL-216</scope>
</reference>
<reference key="8">
    <citation type="journal article" date="2009" name="PLoS ONE">
        <title>The germinal center kinase GCK-1 is a negative regulator of MAP kinase activation and apoptosis in the C. elegans germline.</title>
        <authorList>
            <person name="Schouest K.R."/>
            <person name="Kurasawa Y."/>
            <person name="Furuta T."/>
            <person name="Hisamoto N."/>
            <person name="Matsumoto K."/>
            <person name="Schumacher J.M."/>
        </authorList>
    </citation>
    <scope>FUNCTION</scope>
    <scope>INTERACTION WITH GCK-1</scope>
    <scope>DEVELOPMENTAL STAGE</scope>
    <scope>PHOSPHORYLATION AT THR-256 AND TYR-258</scope>
    <scope>DISRUPTION PHENOTYPE</scope>
</reference>
<reference key="9">
    <citation type="journal article" date="2010" name="J. Biol. Chem.">
        <title>The ERK-MAPK pathway regulates longevity through SKN-1 and insulin-like signaling in Caenorhabditis elegans.</title>
        <authorList>
            <person name="Okuyama T."/>
            <person name="Inoue H."/>
            <person name="Ookuma S."/>
            <person name="Satoh T."/>
            <person name="Kano K."/>
            <person name="Honjoh S."/>
            <person name="Hisamoto N."/>
            <person name="Matsumoto K."/>
            <person name="Nishida E."/>
        </authorList>
    </citation>
    <scope>FUNCTION</scope>
    <scope>CATALYTIC ACTIVITY</scope>
    <scope>COFACTOR</scope>
    <scope>ACTIVITY REGULATION</scope>
    <scope>TISSUE SPECIFICITY</scope>
    <scope>PHOSPHORYLATION AT THR-256 AND TYR-258</scope>
    <scope>DISRUPTION PHENOTYPE</scope>
</reference>
<reference key="10">
    <citation type="journal article" date="2011" name="Am. J. Physiol.">
        <title>C. elegans STK39/SPAK ortholog-mediated inhibition of ClC anion channel activity is regulated by WNK-independent ERK kinase signaling.</title>
        <authorList>
            <person name="Falin R.A."/>
            <person name="Miyazaki H."/>
            <person name="Strange K."/>
        </authorList>
    </citation>
    <scope>FUNCTION</scope>
</reference>
<reference key="11">
    <citation type="journal article" date="2011" name="PLoS Genet.">
        <title>Regulation of Caenorhabditis elegans p53/CEP-1-dependent germ cell apoptosis by Ras/MAPK signaling.</title>
        <authorList>
            <person name="Rutkowski R."/>
            <person name="Dickinson R."/>
            <person name="Stewart G."/>
            <person name="Craig A."/>
            <person name="Schimpl M."/>
            <person name="Keyse S.M."/>
            <person name="Gartner A."/>
        </authorList>
    </citation>
    <scope>FUNCTION</scope>
    <scope>ACTIVITY REGULATION</scope>
    <scope>DEVELOPMENTAL STAGE</scope>
    <scope>DISRUPTION PHENOTYPE</scope>
    <scope>PHOSPHORYLATION AT THR-256 AND TYR-258</scope>
    <scope>MUTAGENESIS OF VAL-216</scope>
</reference>
<reference key="12">
    <citation type="journal article" date="2012" name="Biochim. Biophys. Acta">
        <title>The Ras-ERK MAPK regulatory network controls dedifferentiation in Caenorhabditis elegans germline.</title>
        <authorList>
            <person name="Cha D.S."/>
            <person name="Datla U.S."/>
            <person name="Hollis S.E."/>
            <person name="Kimble J."/>
            <person name="Lee M.H."/>
        </authorList>
    </citation>
    <scope>FUNCTION</scope>
    <scope>TISSUE SPECIFICITY</scope>
    <scope>DEVELOPMENTAL STAGE</scope>
    <scope>PHOSPHORYLATION AT THR-256 AND TYR-258</scope>
    <scope>DISRUPTION PHENOTYPE</scope>
</reference>
<reference key="13">
    <citation type="journal article" date="2016" name="PLoS Pathog.">
        <title>The invertebrate lysozyme effector ILYS-3 is systemically activated in response to danger signals and confers antimicrobial protection in C. elegans.</title>
        <authorList>
            <person name="Gravato-Nobre M.J."/>
            <person name="Vaz F."/>
            <person name="Filipe S."/>
            <person name="Chalmers R."/>
            <person name="Hodgkin J."/>
        </authorList>
    </citation>
    <scope>FUNCTION</scope>
    <scope>MUTAGENESIS OF ALA-106</scope>
    <scope>DISRUPTION PHENOTYPE</scope>
</reference>
<gene>
    <name type="primary">mpk-1</name>
    <name type="synonym">sur-1</name>
    <name type="ORF">F43C1.2</name>
</gene>
<name>MPK1_CAEEL</name>
<organism>
    <name type="scientific">Caenorhabditis elegans</name>
    <dbReference type="NCBI Taxonomy" id="6239"/>
    <lineage>
        <taxon>Eukaryota</taxon>
        <taxon>Metazoa</taxon>
        <taxon>Ecdysozoa</taxon>
        <taxon>Nematoda</taxon>
        <taxon>Chromadorea</taxon>
        <taxon>Rhabditida</taxon>
        <taxon>Rhabditina</taxon>
        <taxon>Rhabditomorpha</taxon>
        <taxon>Rhabditoidea</taxon>
        <taxon>Rhabditidae</taxon>
        <taxon>Peloderinae</taxon>
        <taxon>Caenorhabditis</taxon>
    </lineage>
</organism>